<evidence type="ECO:0000255" key="1">
    <source>
        <dbReference type="HAMAP-Rule" id="MF_01405"/>
    </source>
</evidence>
<reference key="1">
    <citation type="journal article" date="2002" name="Proc. Natl. Acad. Sci. U.S.A.">
        <title>The complete genome sequence of Chlorobium tepidum TLS, a photosynthetic, anaerobic, green-sulfur bacterium.</title>
        <authorList>
            <person name="Eisen J.A."/>
            <person name="Nelson K.E."/>
            <person name="Paulsen I.T."/>
            <person name="Heidelberg J.F."/>
            <person name="Wu M."/>
            <person name="Dodson R.J."/>
            <person name="DeBoy R.T."/>
            <person name="Gwinn M.L."/>
            <person name="Nelson W.C."/>
            <person name="Haft D.H."/>
            <person name="Hickey E.K."/>
            <person name="Peterson J.D."/>
            <person name="Durkin A.S."/>
            <person name="Kolonay J.F."/>
            <person name="Yang F."/>
            <person name="Holt I.E."/>
            <person name="Umayam L.A."/>
            <person name="Mason T.M."/>
            <person name="Brenner M."/>
            <person name="Shea T.P."/>
            <person name="Parksey D.S."/>
            <person name="Nierman W.C."/>
            <person name="Feldblyum T.V."/>
            <person name="Hansen C.L."/>
            <person name="Craven M.B."/>
            <person name="Radune D."/>
            <person name="Vamathevan J.J."/>
            <person name="Khouri H.M."/>
            <person name="White O."/>
            <person name="Gruber T.M."/>
            <person name="Ketchum K.A."/>
            <person name="Venter J.C."/>
            <person name="Tettelin H."/>
            <person name="Bryant D.A."/>
            <person name="Fraser C.M."/>
        </authorList>
    </citation>
    <scope>NUCLEOTIDE SEQUENCE [LARGE SCALE GENOMIC DNA]</scope>
    <source>
        <strain>ATCC 49652 / DSM 12025 / NBRC 103806 / TLS</strain>
    </source>
</reference>
<keyword id="KW-0378">Hydrolase</keyword>
<keyword id="KW-0460">Magnesium</keyword>
<keyword id="KW-0479">Metal-binding</keyword>
<keyword id="KW-0546">Nucleotide metabolism</keyword>
<keyword id="KW-0547">Nucleotide-binding</keyword>
<keyword id="KW-1185">Reference proteome</keyword>
<accession>Q8KFJ6</accession>
<dbReference type="EC" id="3.6.1.66" evidence="1"/>
<dbReference type="EMBL" id="AE006470">
    <property type="protein sequence ID" value="AAM71576.1"/>
    <property type="molecule type" value="Genomic_DNA"/>
</dbReference>
<dbReference type="RefSeq" id="NP_661234.1">
    <property type="nucleotide sequence ID" value="NC_002932.3"/>
</dbReference>
<dbReference type="RefSeq" id="WP_010932022.1">
    <property type="nucleotide sequence ID" value="NC_002932.3"/>
</dbReference>
<dbReference type="SMR" id="Q8KFJ6"/>
<dbReference type="STRING" id="194439.CT0330"/>
<dbReference type="EnsemblBacteria" id="AAM71576">
    <property type="protein sequence ID" value="AAM71576"/>
    <property type="gene ID" value="CT0330"/>
</dbReference>
<dbReference type="KEGG" id="cte:CT0330"/>
<dbReference type="PATRIC" id="fig|194439.7.peg.320"/>
<dbReference type="eggNOG" id="COG0127">
    <property type="taxonomic scope" value="Bacteria"/>
</dbReference>
<dbReference type="HOGENOM" id="CLU_082080_0_2_10"/>
<dbReference type="OrthoDB" id="9807456at2"/>
<dbReference type="Proteomes" id="UP000001007">
    <property type="component" value="Chromosome"/>
</dbReference>
<dbReference type="GO" id="GO:0005829">
    <property type="term" value="C:cytosol"/>
    <property type="evidence" value="ECO:0007669"/>
    <property type="project" value="TreeGrafter"/>
</dbReference>
<dbReference type="GO" id="GO:0035870">
    <property type="term" value="F:dITP diphosphatase activity"/>
    <property type="evidence" value="ECO:0007669"/>
    <property type="project" value="RHEA"/>
</dbReference>
<dbReference type="GO" id="GO:0036220">
    <property type="term" value="F:ITP diphosphatase activity"/>
    <property type="evidence" value="ECO:0007669"/>
    <property type="project" value="UniProtKB-EC"/>
</dbReference>
<dbReference type="GO" id="GO:0046872">
    <property type="term" value="F:metal ion binding"/>
    <property type="evidence" value="ECO:0007669"/>
    <property type="project" value="UniProtKB-KW"/>
</dbReference>
<dbReference type="GO" id="GO:0000166">
    <property type="term" value="F:nucleotide binding"/>
    <property type="evidence" value="ECO:0007669"/>
    <property type="project" value="UniProtKB-KW"/>
</dbReference>
<dbReference type="GO" id="GO:0017111">
    <property type="term" value="F:ribonucleoside triphosphate phosphatase activity"/>
    <property type="evidence" value="ECO:0007669"/>
    <property type="project" value="InterPro"/>
</dbReference>
<dbReference type="GO" id="GO:0036222">
    <property type="term" value="F:XTP diphosphatase activity"/>
    <property type="evidence" value="ECO:0007669"/>
    <property type="project" value="RHEA"/>
</dbReference>
<dbReference type="GO" id="GO:0009117">
    <property type="term" value="P:nucleotide metabolic process"/>
    <property type="evidence" value="ECO:0007669"/>
    <property type="project" value="UniProtKB-KW"/>
</dbReference>
<dbReference type="GO" id="GO:0009146">
    <property type="term" value="P:purine nucleoside triphosphate catabolic process"/>
    <property type="evidence" value="ECO:0007669"/>
    <property type="project" value="UniProtKB-UniRule"/>
</dbReference>
<dbReference type="CDD" id="cd00515">
    <property type="entry name" value="HAM1"/>
    <property type="match status" value="1"/>
</dbReference>
<dbReference type="FunFam" id="3.90.950.10:FF:000001">
    <property type="entry name" value="dITP/XTP pyrophosphatase"/>
    <property type="match status" value="1"/>
</dbReference>
<dbReference type="Gene3D" id="3.90.950.10">
    <property type="match status" value="1"/>
</dbReference>
<dbReference type="HAMAP" id="MF_01405">
    <property type="entry name" value="Non_canon_purine_NTPase"/>
    <property type="match status" value="1"/>
</dbReference>
<dbReference type="InterPro" id="IPR020922">
    <property type="entry name" value="dITP/XTP_pyrophosphatase"/>
</dbReference>
<dbReference type="InterPro" id="IPR029001">
    <property type="entry name" value="ITPase-like_fam"/>
</dbReference>
<dbReference type="InterPro" id="IPR002637">
    <property type="entry name" value="RdgB/HAM1"/>
</dbReference>
<dbReference type="NCBIfam" id="NF011401">
    <property type="entry name" value="PRK14826.1"/>
    <property type="match status" value="1"/>
</dbReference>
<dbReference type="NCBIfam" id="TIGR00042">
    <property type="entry name" value="RdgB/HAM1 family non-canonical purine NTP pyrophosphatase"/>
    <property type="match status" value="1"/>
</dbReference>
<dbReference type="PANTHER" id="PTHR11067:SF9">
    <property type="entry name" value="INOSINE TRIPHOSPHATE PYROPHOSPHATASE"/>
    <property type="match status" value="1"/>
</dbReference>
<dbReference type="PANTHER" id="PTHR11067">
    <property type="entry name" value="INOSINE TRIPHOSPHATE PYROPHOSPHATASE/HAM1 PROTEIN"/>
    <property type="match status" value="1"/>
</dbReference>
<dbReference type="Pfam" id="PF01725">
    <property type="entry name" value="Ham1p_like"/>
    <property type="match status" value="1"/>
</dbReference>
<dbReference type="SUPFAM" id="SSF52972">
    <property type="entry name" value="ITPase-like"/>
    <property type="match status" value="1"/>
</dbReference>
<comment type="function">
    <text evidence="1">Pyrophosphatase that catalyzes the hydrolysis of nucleoside triphosphates to their monophosphate derivatives, with a high preference for the non-canonical purine nucleotides XTP (xanthosine triphosphate), dITP (deoxyinosine triphosphate) and ITP. Seems to function as a house-cleaning enzyme that removes non-canonical purine nucleotides from the nucleotide pool, thus preventing their incorporation into DNA/RNA and avoiding chromosomal lesions.</text>
</comment>
<comment type="catalytic activity">
    <reaction evidence="1">
        <text>XTP + H2O = XMP + diphosphate + H(+)</text>
        <dbReference type="Rhea" id="RHEA:28610"/>
        <dbReference type="ChEBI" id="CHEBI:15377"/>
        <dbReference type="ChEBI" id="CHEBI:15378"/>
        <dbReference type="ChEBI" id="CHEBI:33019"/>
        <dbReference type="ChEBI" id="CHEBI:57464"/>
        <dbReference type="ChEBI" id="CHEBI:61314"/>
        <dbReference type="EC" id="3.6.1.66"/>
    </reaction>
</comment>
<comment type="catalytic activity">
    <reaction evidence="1">
        <text>dITP + H2O = dIMP + diphosphate + H(+)</text>
        <dbReference type="Rhea" id="RHEA:28342"/>
        <dbReference type="ChEBI" id="CHEBI:15377"/>
        <dbReference type="ChEBI" id="CHEBI:15378"/>
        <dbReference type="ChEBI" id="CHEBI:33019"/>
        <dbReference type="ChEBI" id="CHEBI:61194"/>
        <dbReference type="ChEBI" id="CHEBI:61382"/>
        <dbReference type="EC" id="3.6.1.66"/>
    </reaction>
</comment>
<comment type="catalytic activity">
    <reaction evidence="1">
        <text>ITP + H2O = IMP + diphosphate + H(+)</text>
        <dbReference type="Rhea" id="RHEA:29399"/>
        <dbReference type="ChEBI" id="CHEBI:15377"/>
        <dbReference type="ChEBI" id="CHEBI:15378"/>
        <dbReference type="ChEBI" id="CHEBI:33019"/>
        <dbReference type="ChEBI" id="CHEBI:58053"/>
        <dbReference type="ChEBI" id="CHEBI:61402"/>
        <dbReference type="EC" id="3.6.1.66"/>
    </reaction>
</comment>
<comment type="cofactor">
    <cofactor evidence="1">
        <name>Mg(2+)</name>
        <dbReference type="ChEBI" id="CHEBI:18420"/>
    </cofactor>
    <text evidence="1">Binds 1 Mg(2+) ion per subunit.</text>
</comment>
<comment type="subunit">
    <text evidence="1">Homodimer.</text>
</comment>
<comment type="similarity">
    <text evidence="1">Belongs to the HAM1 NTPase family.</text>
</comment>
<sequence>MEPKHPEITIVLATGNKDKVRELKPVLEALASGIHVRSLHDLGLDIDVEETEPTLEGNARLKADAIFELVAPRLDWFIALADDTGLEVDALGGAPGVYSARYAPVPEGVARTYEDNVRHLLSEMRGKSKRTARFRTVIAMKGRLPAANGSAVEIEETTDGHIDGLITTEPKGNGGFGYDPVFAPEGMDRTFAQLGIDEKNAISHRGRAVVAAAKRIGEYLSQCGIQ</sequence>
<proteinExistence type="inferred from homology"/>
<feature type="chain" id="PRO_0000178151" description="dITP/XTP pyrophosphatase">
    <location>
        <begin position="1"/>
        <end position="226"/>
    </location>
</feature>
<feature type="active site" description="Proton acceptor" evidence="1">
    <location>
        <position position="83"/>
    </location>
</feature>
<feature type="binding site" evidence="1">
    <location>
        <begin position="14"/>
        <end position="19"/>
    </location>
    <ligand>
        <name>substrate</name>
    </ligand>
</feature>
<feature type="binding site" evidence="1">
    <location>
        <position position="49"/>
    </location>
    <ligand>
        <name>Mg(2+)</name>
        <dbReference type="ChEBI" id="CHEBI:18420"/>
    </ligand>
</feature>
<feature type="binding site" evidence="1">
    <location>
        <position position="83"/>
    </location>
    <ligand>
        <name>Mg(2+)</name>
        <dbReference type="ChEBI" id="CHEBI:18420"/>
    </ligand>
</feature>
<feature type="binding site" evidence="1">
    <location>
        <position position="84"/>
    </location>
    <ligand>
        <name>substrate</name>
    </ligand>
</feature>
<feature type="binding site" evidence="1">
    <location>
        <begin position="176"/>
        <end position="179"/>
    </location>
    <ligand>
        <name>substrate</name>
    </ligand>
</feature>
<feature type="binding site" evidence="1">
    <location>
        <position position="199"/>
    </location>
    <ligand>
        <name>substrate</name>
    </ligand>
</feature>
<feature type="binding site" evidence="1">
    <location>
        <begin position="204"/>
        <end position="205"/>
    </location>
    <ligand>
        <name>substrate</name>
    </ligand>
</feature>
<organism>
    <name type="scientific">Chlorobaculum tepidum (strain ATCC 49652 / DSM 12025 / NBRC 103806 / TLS)</name>
    <name type="common">Chlorobium tepidum</name>
    <dbReference type="NCBI Taxonomy" id="194439"/>
    <lineage>
        <taxon>Bacteria</taxon>
        <taxon>Pseudomonadati</taxon>
        <taxon>Chlorobiota</taxon>
        <taxon>Chlorobiia</taxon>
        <taxon>Chlorobiales</taxon>
        <taxon>Chlorobiaceae</taxon>
        <taxon>Chlorobaculum</taxon>
    </lineage>
</organism>
<name>IXTPA_CHLTE</name>
<protein>
    <recommendedName>
        <fullName evidence="1">dITP/XTP pyrophosphatase</fullName>
        <ecNumber evidence="1">3.6.1.66</ecNumber>
    </recommendedName>
    <alternativeName>
        <fullName evidence="1">Non-canonical purine NTP pyrophosphatase</fullName>
    </alternativeName>
    <alternativeName>
        <fullName evidence="1">Non-standard purine NTP pyrophosphatase</fullName>
    </alternativeName>
    <alternativeName>
        <fullName evidence="1">Nucleoside-triphosphate diphosphatase</fullName>
    </alternativeName>
    <alternativeName>
        <fullName evidence="1">Nucleoside-triphosphate pyrophosphatase</fullName>
        <shortName evidence="1">NTPase</shortName>
    </alternativeName>
</protein>
<gene>
    <name type="ordered locus">CT0330</name>
</gene>